<organism>
    <name type="scientific">Aspergillus fumigatus (strain CBS 144.89 / FGSC A1163 / CEA10)</name>
    <name type="common">Neosartorya fumigata</name>
    <dbReference type="NCBI Taxonomy" id="451804"/>
    <lineage>
        <taxon>Eukaryota</taxon>
        <taxon>Fungi</taxon>
        <taxon>Dikarya</taxon>
        <taxon>Ascomycota</taxon>
        <taxon>Pezizomycotina</taxon>
        <taxon>Eurotiomycetes</taxon>
        <taxon>Eurotiomycetidae</taxon>
        <taxon>Eurotiales</taxon>
        <taxon>Aspergillaceae</taxon>
        <taxon>Aspergillus</taxon>
        <taxon>Aspergillus subgen. Fumigati</taxon>
    </lineage>
</organism>
<reference key="1">
    <citation type="journal article" date="2000" name="Biochem. J.">
        <title>Identification of the catalytic residues of the first family of beta(1-3)glucanosyltransferases identified in fungi.</title>
        <authorList>
            <person name="Mouyna I."/>
            <person name="Monod M."/>
            <person name="Fontaine T."/>
            <person name="Henrissat B."/>
            <person name="Lechenne B."/>
            <person name="Latge J.-P."/>
        </authorList>
    </citation>
    <scope>NUCLEOTIDE SEQUENCE [GENOMIC DNA]</scope>
</reference>
<reference key="2">
    <citation type="journal article" date="2008" name="PLoS Genet.">
        <title>Genomic islands in the pathogenic filamentous fungus Aspergillus fumigatus.</title>
        <authorList>
            <person name="Fedorova N.D."/>
            <person name="Khaldi N."/>
            <person name="Joardar V.S."/>
            <person name="Maiti R."/>
            <person name="Amedeo P."/>
            <person name="Anderson M.J."/>
            <person name="Crabtree J."/>
            <person name="Silva J.C."/>
            <person name="Badger J.H."/>
            <person name="Albarraq A."/>
            <person name="Angiuoli S."/>
            <person name="Bussey H."/>
            <person name="Bowyer P."/>
            <person name="Cotty P.J."/>
            <person name="Dyer P.S."/>
            <person name="Egan A."/>
            <person name="Galens K."/>
            <person name="Fraser-Liggett C.M."/>
            <person name="Haas B.J."/>
            <person name="Inman J.M."/>
            <person name="Kent R."/>
            <person name="Lemieux S."/>
            <person name="Malavazi I."/>
            <person name="Orvis J."/>
            <person name="Roemer T."/>
            <person name="Ronning C.M."/>
            <person name="Sundaram J.P."/>
            <person name="Sutton G."/>
            <person name="Turner G."/>
            <person name="Venter J.C."/>
            <person name="White O.R."/>
            <person name="Whitty B.R."/>
            <person name="Youngman P."/>
            <person name="Wolfe K.H."/>
            <person name="Goldman G.H."/>
            <person name="Wortman J.R."/>
            <person name="Jiang B."/>
            <person name="Denning D.W."/>
            <person name="Nierman W.C."/>
        </authorList>
    </citation>
    <scope>NUCLEOTIDE SEQUENCE [LARGE SCALE GENOMIC DNA]</scope>
    <source>
        <strain>CBS 144.89 / FGSC A1163 / CEA10</strain>
    </source>
</reference>
<reference key="3">
    <citation type="journal article" date="2003" name="Glycobiology">
        <title>Structures of the glycosylphosphatidylinositol membrane anchors from Aspergillus fumigatus membrane proteins.</title>
        <authorList>
            <person name="Fontaine T."/>
            <person name="Magnin T."/>
            <person name="Melhert A."/>
            <person name="Lamont D."/>
            <person name="Latge J.-P."/>
            <person name="Ferguson M.A.J."/>
        </authorList>
    </citation>
    <scope>STRUCTURE OF GPI-ANCHOR</scope>
</reference>
<proteinExistence type="evidence at protein level"/>
<comment type="function">
    <text evidence="1">Splits internally a 1,3-beta-glucan molecule and transfers the newly generated reducing end (the donor) to the non-reducing end of another 1,3-beta-glucan molecule (the acceptor) forming a 1,3-beta linkage, resulting in the elongation of 1,3-beta-glucan chains in the cell wall. Involved in cell wall morphogenesis (By similarity).</text>
</comment>
<comment type="subcellular location">
    <subcellularLocation>
        <location evidence="5">Cell membrane</location>
        <topology evidence="5">Lipid-anchor</topology>
        <topology evidence="5">GPI-anchor</topology>
    </subcellularLocation>
</comment>
<comment type="PTM">
    <text>The GPI-like anchor contains a phosphoceramide lipid group.</text>
</comment>
<comment type="similarity">
    <text evidence="5">Belongs to the glycosyl hydrolase 72 family.</text>
</comment>
<comment type="sequence caution" evidence="5">
    <conflict type="erroneous gene model prediction">
        <sequence resource="EMBL-CDS" id="AAF40140"/>
    </conflict>
</comment>
<protein>
    <recommendedName>
        <fullName>1,3-beta-glucanosyltransferase gel3</fullName>
        <ecNumber>2.4.1.-</ecNumber>
    </recommendedName>
    <alternativeName>
        <fullName>Glucan elongating glucanosyltransferase 3</fullName>
    </alternativeName>
</protein>
<name>GEL3_ASPFC</name>
<accession>B0XT09</accession>
<accession>Q4X0N8</accession>
<accession>Q9P8U3</accession>
<evidence type="ECO:0000250" key="1"/>
<evidence type="ECO:0000250" key="2">
    <source>
        <dbReference type="UniProtKB" id="Q06135"/>
    </source>
</evidence>
<evidence type="ECO:0000255" key="3"/>
<evidence type="ECO:0000256" key="4">
    <source>
        <dbReference type="SAM" id="MobiDB-lite"/>
    </source>
</evidence>
<evidence type="ECO:0000305" key="5"/>
<dbReference type="EC" id="2.4.1.-"/>
<dbReference type="EMBL" id="AF208040">
    <property type="protein sequence ID" value="AAF40140.1"/>
    <property type="status" value="ALT_SEQ"/>
    <property type="molecule type" value="Genomic_DNA"/>
</dbReference>
<dbReference type="EMBL" id="DS499595">
    <property type="protein sequence ID" value="EDP54787.1"/>
    <property type="molecule type" value="Genomic_DNA"/>
</dbReference>
<dbReference type="SMR" id="B0XT09"/>
<dbReference type="GlyCosmos" id="B0XT09">
    <property type="glycosylation" value="4 sites, No reported glycans"/>
</dbReference>
<dbReference type="EnsemblFungi" id="EDP54787">
    <property type="protein sequence ID" value="EDP54787"/>
    <property type="gene ID" value="AFUB_028470"/>
</dbReference>
<dbReference type="VEuPathDB" id="FungiDB:AFUB_028470"/>
<dbReference type="HOGENOM" id="CLU_021855_2_1_1"/>
<dbReference type="OrthoDB" id="69794at5052"/>
<dbReference type="PhylomeDB" id="B0XT09"/>
<dbReference type="Proteomes" id="UP000001699">
    <property type="component" value="Unassembled WGS sequence"/>
</dbReference>
<dbReference type="GO" id="GO:0005886">
    <property type="term" value="C:plasma membrane"/>
    <property type="evidence" value="ECO:0007669"/>
    <property type="project" value="UniProtKB-SubCell"/>
</dbReference>
<dbReference type="GO" id="GO:0098552">
    <property type="term" value="C:side of membrane"/>
    <property type="evidence" value="ECO:0007669"/>
    <property type="project" value="UniProtKB-KW"/>
</dbReference>
<dbReference type="GO" id="GO:0042124">
    <property type="term" value="F:1,3-beta-glucanosyltransferase activity"/>
    <property type="evidence" value="ECO:0007669"/>
    <property type="project" value="TreeGrafter"/>
</dbReference>
<dbReference type="GO" id="GO:0071970">
    <property type="term" value="P:fungal-type cell wall (1-&gt;3)-beta-D-glucan biosynthetic process"/>
    <property type="evidence" value="ECO:0007669"/>
    <property type="project" value="TreeGrafter"/>
</dbReference>
<dbReference type="GO" id="GO:0031505">
    <property type="term" value="P:fungal-type cell wall organization"/>
    <property type="evidence" value="ECO:0007669"/>
    <property type="project" value="TreeGrafter"/>
</dbReference>
<dbReference type="FunFam" id="1.20.58.1040:FF:000005">
    <property type="entry name" value="1,3-beta-glucanosyltransferase"/>
    <property type="match status" value="1"/>
</dbReference>
<dbReference type="FunFam" id="3.20.20.80:FF:000038">
    <property type="entry name" value="1,3-beta-glucanosyltransferase"/>
    <property type="match status" value="1"/>
</dbReference>
<dbReference type="Gene3D" id="1.20.58.1040">
    <property type="match status" value="1"/>
</dbReference>
<dbReference type="Gene3D" id="3.20.20.80">
    <property type="entry name" value="Glycosidases"/>
    <property type="match status" value="1"/>
</dbReference>
<dbReference type="InterPro" id="IPR004886">
    <property type="entry name" value="Glucanosyltransferase"/>
</dbReference>
<dbReference type="InterPro" id="IPR017853">
    <property type="entry name" value="Glycoside_hydrolase_SF"/>
</dbReference>
<dbReference type="InterPro" id="IPR012946">
    <property type="entry name" value="X8"/>
</dbReference>
<dbReference type="PANTHER" id="PTHR31468:SF11">
    <property type="entry name" value="1,3-BETA-GLUCANOSYLTRANSFERASE"/>
    <property type="match status" value="1"/>
</dbReference>
<dbReference type="PANTHER" id="PTHR31468">
    <property type="entry name" value="1,3-BETA-GLUCANOSYLTRANSFERASE GAS1"/>
    <property type="match status" value="1"/>
</dbReference>
<dbReference type="Pfam" id="PF03198">
    <property type="entry name" value="Glyco_hydro_72"/>
    <property type="match status" value="1"/>
</dbReference>
<dbReference type="Pfam" id="PF07983">
    <property type="entry name" value="X8"/>
    <property type="match status" value="1"/>
</dbReference>
<dbReference type="SMART" id="SM00768">
    <property type="entry name" value="X8"/>
    <property type="match status" value="1"/>
</dbReference>
<dbReference type="SUPFAM" id="SSF51445">
    <property type="entry name" value="(Trans)glycosidases"/>
    <property type="match status" value="1"/>
</dbReference>
<sequence>MRYSLVVGVVLLSGCAIATGSKFFYANNGSEFYIRGVAYQEDYSGGGAGGTGQSEANYVDPLADGSKCERDIPYLLQLRTNVIRTYAVNPSLNHDACMQKLSDAGIYVITDLASPDESITSNSPVWTVDQYARYTSVIDAFQKYDNVIGFFAGNEVVNQANQSAGAAFVKAAARDMKAYIKTKGYRQSLAIGYATTDNPEIRLPLSDYLNCGDQADAVDFFGYNIYEWCGDKTFQTSGYQNRTEEYKDYSIPIFFSEYGCNTEKPRKFTDVPVLFGPQMDNVWSGGIVYMYFETTNDYGLVSVSGSAVTPEPDFTYLSSEIQSATPTGVNSASYSPTNSPRACPTVDDTWLAKSSPLPPIPNAELCSCMVSSLSCVVKDSVDAEKYGELFGQVCGYGGGICDGIARNATAGSYGAYSVCTSKDQLSYVFDRYYKSQKKAASACDFAGAASVQSPKGESADCKSLVSQAGSAGTGTVTSQPTGGSGSTGGGGGGGGGGGGGGGAAASTSTSKGAAAGAASPAAVRVGGWPLVTYGLVAAMAGILMISL</sequence>
<gene>
    <name type="primary">gel3</name>
    <name type="ORF">AFUB_028470</name>
</gene>
<feature type="signal peptide" evidence="3">
    <location>
        <begin position="1"/>
        <end position="20"/>
    </location>
</feature>
<feature type="chain" id="PRO_0000372607" description="1,3-beta-glucanosyltransferase gel3">
    <location>
        <begin position="21"/>
        <end position="515"/>
    </location>
</feature>
<feature type="propeptide" id="PRO_0000372608" description="Removed in mature form" evidence="3">
    <location>
        <begin position="516"/>
        <end position="547"/>
    </location>
</feature>
<feature type="region of interest" description="Disordered" evidence="4">
    <location>
        <begin position="471"/>
        <end position="503"/>
    </location>
</feature>
<feature type="compositionally biased region" description="Gly residues" evidence="4">
    <location>
        <begin position="482"/>
        <end position="503"/>
    </location>
</feature>
<feature type="active site" description="Proton donor" evidence="1">
    <location>
        <position position="155"/>
    </location>
</feature>
<feature type="active site" description="Nucleophile" evidence="1">
    <location>
        <position position="257"/>
    </location>
</feature>
<feature type="binding site" evidence="2">
    <location>
        <position position="86"/>
    </location>
    <ligand>
        <name>(1,3-beta-D-glucosyl)n</name>
        <dbReference type="ChEBI" id="CHEBI:37671"/>
        <label>1</label>
        <note>donor substrate</note>
    </ligand>
</feature>
<feature type="binding site" evidence="2">
    <location>
        <position position="154"/>
    </location>
    <ligand>
        <name>(1,3-beta-D-glucosyl)n</name>
        <dbReference type="ChEBI" id="CHEBI:37671"/>
        <label>1</label>
        <note>donor substrate</note>
    </ligand>
</feature>
<feature type="binding site" evidence="2">
    <location>
        <position position="155"/>
    </location>
    <ligand>
        <name>(1,3-beta-D-glucosyl)n</name>
        <dbReference type="ChEBI" id="CHEBI:37671"/>
        <label>2</label>
        <note>acceptor substrate</note>
    </ligand>
</feature>
<feature type="binding site" evidence="2">
    <location>
        <position position="197"/>
    </location>
    <ligand>
        <name>(1,3-beta-D-glucosyl)n</name>
        <dbReference type="ChEBI" id="CHEBI:37671"/>
        <label>2</label>
        <note>acceptor substrate</note>
    </ligand>
</feature>
<feature type="binding site" evidence="2">
    <location>
        <position position="202"/>
    </location>
    <ligand>
        <name>(1,3-beta-D-glucosyl)n</name>
        <dbReference type="ChEBI" id="CHEBI:37671"/>
        <label>2</label>
        <note>acceptor substrate</note>
    </ligand>
</feature>
<feature type="binding site" evidence="2">
    <location>
        <position position="289"/>
    </location>
    <ligand>
        <name>(1,3-beta-D-glucosyl)n</name>
        <dbReference type="ChEBI" id="CHEBI:37671"/>
        <label>1</label>
        <note>donor substrate</note>
    </ligand>
</feature>
<feature type="lipid moiety-binding region" description="GPI-like-anchor amidated alanine" evidence="3">
    <location>
        <position position="515"/>
    </location>
</feature>
<feature type="glycosylation site" description="N-linked (GlcNAc...) asparagine" evidence="3">
    <location>
        <position position="28"/>
    </location>
</feature>
<feature type="glycosylation site" description="N-linked (GlcNAc...) asparagine" evidence="3">
    <location>
        <position position="161"/>
    </location>
</feature>
<feature type="glycosylation site" description="N-linked (GlcNAc...) asparagine" evidence="3">
    <location>
        <position position="241"/>
    </location>
</feature>
<feature type="glycosylation site" description="N-linked (GlcNAc...) asparagine" evidence="3">
    <location>
        <position position="407"/>
    </location>
</feature>
<feature type="disulfide bond" evidence="2">
    <location>
        <begin position="68"/>
        <end position="97"/>
    </location>
</feature>
<feature type="disulfide bond" evidence="2">
    <location>
        <begin position="211"/>
        <end position="343"/>
    </location>
</feature>
<feature type="disulfide bond" evidence="2">
    <location>
        <begin position="229"/>
        <end position="260"/>
    </location>
</feature>
<feature type="disulfide bond" evidence="2">
    <location>
        <begin position="366"/>
        <end position="419"/>
    </location>
</feature>
<feature type="disulfide bond" evidence="2">
    <location>
        <begin position="375"/>
        <end position="443"/>
    </location>
</feature>
<feature type="disulfide bond" evidence="2">
    <location>
        <begin position="394"/>
        <end position="401"/>
    </location>
</feature>
<feature type="sequence conflict" description="In Ref. 1; AAF40140." evidence="5" ref="1">
    <original>G</original>
    <variation>E</variation>
    <location>
        <position position="485"/>
    </location>
</feature>
<feature type="sequence conflict" description="In Ref. 1; AAF40140." evidence="5" ref="1">
    <location>
        <position position="502"/>
    </location>
</feature>
<keyword id="KW-1003">Cell membrane</keyword>
<keyword id="KW-1015">Disulfide bond</keyword>
<keyword id="KW-0325">Glycoprotein</keyword>
<keyword id="KW-0336">GPI-anchor</keyword>
<keyword id="KW-0449">Lipoprotein</keyword>
<keyword id="KW-0472">Membrane</keyword>
<keyword id="KW-0732">Signal</keyword>
<keyword id="KW-0808">Transferase</keyword>